<sequence>MFEINPVNNRIQDLTERTNVLRGYLDYDAKKERLEEVNAELEQPDVWNEPERAQALGKERSSLEAIVDTLDQMTQGLDDVSGLLELAVEADDEETFNEAVAELNTLEEKLAQLEFRRMFSGEYDSADCYLDIQAGSGGTEAQDWASMLLRMYLRWAEARGFKTEVIEESEGEVAGIKSATIKISGEYAYGWLRTETGVHRLVRKSPFDSGGRRHTSFSSAFVYPEVDDDIDIDINPADLRIDVYRASGAGGQHVNRTESAVRITHIPTGIVTQCQNDRSQHKNKDQAMKQMKAKLYELEMQKKNAEKQAMEDTKSDIGWGSQIRSYVLDDSRIKDLRTGVETRNTQAVLDGSLDQFIEASLKAGL</sequence>
<comment type="function">
    <text evidence="1">Peptide chain release factor 2 directs the termination of translation in response to the peptide chain termination codons UGA and UAA.</text>
</comment>
<comment type="subcellular location">
    <subcellularLocation>
        <location evidence="1">Cytoplasm</location>
    </subcellularLocation>
</comment>
<comment type="PTM">
    <text evidence="1">Methylated by PrmC. Methylation increases the termination efficiency of RF2 (By similarity).</text>
</comment>
<comment type="miscellaneous">
    <text>The gene for this protein contains a UGA in-frame termination codon after Leu-25; a naturally occurring frameshift enables complete translation of RF-2. This provides a mechanism for the protein to regulate its own production.</text>
</comment>
<comment type="similarity">
    <text evidence="2">Belongs to the prokaryotic/mitochondrial release factor family.</text>
</comment>
<comment type="sequence caution" evidence="2">
    <conflict type="frameshift">
        <sequence resource="EMBL-CDS" id="AAL21916"/>
    </conflict>
</comment>
<proteinExistence type="inferred from homology"/>
<gene>
    <name type="primary">prfB</name>
    <name type="ordered locus">STM3041</name>
</gene>
<dbReference type="EMBL" id="M38590">
    <property type="protein sequence ID" value="AAA72914.1"/>
    <property type="molecule type" value="Genomic_DNA"/>
</dbReference>
<dbReference type="EMBL" id="AE006468">
    <property type="protein sequence ID" value="AAL21916.1"/>
    <property type="status" value="ALT_FRAME"/>
    <property type="molecule type" value="Genomic_DNA"/>
</dbReference>
<dbReference type="PIR" id="A36480">
    <property type="entry name" value="A36480"/>
</dbReference>
<dbReference type="RefSeq" id="NP_461957.3">
    <property type="nucleotide sequence ID" value="NC_003197.2"/>
</dbReference>
<dbReference type="RefSeq" id="WP_000191839.1">
    <property type="nucleotide sequence ID" value="NC_003197.2"/>
</dbReference>
<dbReference type="SMR" id="P0A289"/>
<dbReference type="STRING" id="99287.STM3041"/>
<dbReference type="PaxDb" id="99287-STM3041"/>
<dbReference type="GeneID" id="1254564"/>
<dbReference type="KEGG" id="stm:STM3041"/>
<dbReference type="HOGENOM" id="CLU_036856_6_1_6"/>
<dbReference type="PhylomeDB" id="P0A289"/>
<dbReference type="Proteomes" id="UP000001014">
    <property type="component" value="Chromosome"/>
</dbReference>
<dbReference type="GO" id="GO:0005737">
    <property type="term" value="C:cytoplasm"/>
    <property type="evidence" value="ECO:0007669"/>
    <property type="project" value="UniProtKB-SubCell"/>
</dbReference>
<dbReference type="GO" id="GO:0016149">
    <property type="term" value="F:translation release factor activity, codon specific"/>
    <property type="evidence" value="ECO:0007669"/>
    <property type="project" value="UniProtKB-UniRule"/>
</dbReference>
<dbReference type="GO" id="GO:0075523">
    <property type="term" value="P:viral translational frameshifting"/>
    <property type="evidence" value="ECO:0007669"/>
    <property type="project" value="UniProtKB-KW"/>
</dbReference>
<dbReference type="FunFam" id="1.20.58.410:FF:000001">
    <property type="entry name" value="Peptide chain release factor 2"/>
    <property type="match status" value="1"/>
</dbReference>
<dbReference type="FunFam" id="3.30.160.20:FF:000010">
    <property type="entry name" value="Peptide chain release factor 2"/>
    <property type="match status" value="1"/>
</dbReference>
<dbReference type="Gene3D" id="3.30.160.20">
    <property type="match status" value="1"/>
</dbReference>
<dbReference type="Gene3D" id="3.30.70.1660">
    <property type="match status" value="1"/>
</dbReference>
<dbReference type="Gene3D" id="1.20.58.410">
    <property type="entry name" value="Release factor"/>
    <property type="match status" value="1"/>
</dbReference>
<dbReference type="HAMAP" id="MF_00094">
    <property type="entry name" value="Rel_fac_2"/>
    <property type="match status" value="1"/>
</dbReference>
<dbReference type="InterPro" id="IPR005139">
    <property type="entry name" value="PCRF"/>
</dbReference>
<dbReference type="InterPro" id="IPR000352">
    <property type="entry name" value="Pep_chain_release_fac_I"/>
</dbReference>
<dbReference type="InterPro" id="IPR045853">
    <property type="entry name" value="Pep_chain_release_fac_I_sf"/>
</dbReference>
<dbReference type="InterPro" id="IPR004374">
    <property type="entry name" value="PrfB"/>
</dbReference>
<dbReference type="NCBIfam" id="TIGR00020">
    <property type="entry name" value="prfB"/>
    <property type="match status" value="1"/>
</dbReference>
<dbReference type="PANTHER" id="PTHR43116:SF3">
    <property type="entry name" value="CLASS I PEPTIDE CHAIN RELEASE FACTOR"/>
    <property type="match status" value="1"/>
</dbReference>
<dbReference type="PANTHER" id="PTHR43116">
    <property type="entry name" value="PEPTIDE CHAIN RELEASE FACTOR 2"/>
    <property type="match status" value="1"/>
</dbReference>
<dbReference type="Pfam" id="PF03462">
    <property type="entry name" value="PCRF"/>
    <property type="match status" value="1"/>
</dbReference>
<dbReference type="Pfam" id="PF00472">
    <property type="entry name" value="RF-1"/>
    <property type="match status" value="1"/>
</dbReference>
<dbReference type="SMART" id="SM00937">
    <property type="entry name" value="PCRF"/>
    <property type="match status" value="1"/>
</dbReference>
<dbReference type="SUPFAM" id="SSF75620">
    <property type="entry name" value="Release factor"/>
    <property type="match status" value="1"/>
</dbReference>
<dbReference type="PROSITE" id="PS00745">
    <property type="entry name" value="RF_PROK_I"/>
    <property type="match status" value="1"/>
</dbReference>
<protein>
    <recommendedName>
        <fullName>Peptide chain release factor 2</fullName>
        <shortName>RF-2</shortName>
    </recommendedName>
</protein>
<reference key="1">
    <citation type="journal article" date="1990" name="Proc. Natl. Acad. Sci. U.S.A.">
        <title>Autogenous suppression of an opal mutation in the gene encoding peptide chain release factor 2.</title>
        <authorList>
            <person name="Kawakami K."/>
            <person name="Nakamura Y."/>
        </authorList>
    </citation>
    <scope>NUCLEOTIDE SEQUENCE [GENOMIC DNA]</scope>
    <source>
        <strain>LT2</strain>
    </source>
</reference>
<reference key="2">
    <citation type="journal article" date="2001" name="Nature">
        <title>Complete genome sequence of Salmonella enterica serovar Typhimurium LT2.</title>
        <authorList>
            <person name="McClelland M."/>
            <person name="Sanderson K.E."/>
            <person name="Spieth J."/>
            <person name="Clifton S.W."/>
            <person name="Latreille P."/>
            <person name="Courtney L."/>
            <person name="Porwollik S."/>
            <person name="Ali J."/>
            <person name="Dante M."/>
            <person name="Du F."/>
            <person name="Hou S."/>
            <person name="Layman D."/>
            <person name="Leonard S."/>
            <person name="Nguyen C."/>
            <person name="Scott K."/>
            <person name="Holmes A."/>
            <person name="Grewal N."/>
            <person name="Mulvaney E."/>
            <person name="Ryan E."/>
            <person name="Sun H."/>
            <person name="Florea L."/>
            <person name="Miller W."/>
            <person name="Stoneking T."/>
            <person name="Nhan M."/>
            <person name="Waterston R."/>
            <person name="Wilson R.K."/>
        </authorList>
    </citation>
    <scope>NUCLEOTIDE SEQUENCE [LARGE SCALE GENOMIC DNA]</scope>
    <source>
        <strain>LT2 / SGSC1412 / ATCC 700720</strain>
    </source>
</reference>
<feature type="chain" id="PRO_0000166843" description="Peptide chain release factor 2">
    <location>
        <begin position="1"/>
        <end position="365"/>
    </location>
</feature>
<feature type="modified residue" description="N5-methylglutamine" evidence="1">
    <location>
        <position position="252"/>
    </location>
</feature>
<keyword id="KW-0963">Cytoplasm</keyword>
<keyword id="KW-0488">Methylation</keyword>
<keyword id="KW-0648">Protein biosynthesis</keyword>
<keyword id="KW-1185">Reference proteome</keyword>
<keyword id="KW-0688">Ribosomal frameshifting</keyword>
<accession>P0A289</accession>
<accession>P28353</accession>
<organism>
    <name type="scientific">Salmonella typhimurium (strain LT2 / SGSC1412 / ATCC 700720)</name>
    <dbReference type="NCBI Taxonomy" id="99287"/>
    <lineage>
        <taxon>Bacteria</taxon>
        <taxon>Pseudomonadati</taxon>
        <taxon>Pseudomonadota</taxon>
        <taxon>Gammaproteobacteria</taxon>
        <taxon>Enterobacterales</taxon>
        <taxon>Enterobacteriaceae</taxon>
        <taxon>Salmonella</taxon>
    </lineage>
</organism>
<evidence type="ECO:0000250" key="1"/>
<evidence type="ECO:0000305" key="2"/>
<name>RF2_SALTY</name>